<gene>
    <name evidence="1" type="primary">cobQ</name>
    <name type="ordered locus">tll1716</name>
</gene>
<sequence>MKAKSLMVVGTTSHAGKSLLAAVICRWLAQQGYRVTPFKGQNMALNAYVTREGGEIGYAQAMQAWAAGIEPEVAMNPILLKPQGNMTSQVILRGQVVGVTRAADYYRDYFERGWQAITEALADLQQRFDWIVCEGAGSPAEINLKHRDLTNMRVATYLGAPTILVADIDRGGVFAHIVGTLMLLEPAERALIQGIVINKFRGQRSLLDSGLQWLEETTGVPVLGVIPWLERHYAAEDSLDLWDPRPQRQGADLKITVIRLPRIANFTDIDPLLAEPSVAVEFLPPHRPLGRPDAVILPGTKTTIADLQVLRETGMAEQLKTYAAQGGTILGICGGWQMLGTAISDPLGLEGCPGTYEGLGLMPLHTQLGPTKCTQQQQTQSLYFNCPEPILGYEIHQGQSEYTGDRQGWHPLFAAPELGLVNRAGTLWGTYLHGLLENGPWRRHWLNGLRSRRQLPPLPTAIPHYGEQRTVALDELTKTVMAHLNLRGICKLC</sequence>
<evidence type="ECO:0000255" key="1">
    <source>
        <dbReference type="HAMAP-Rule" id="MF_00028"/>
    </source>
</evidence>
<dbReference type="EMBL" id="BA000039">
    <property type="protein sequence ID" value="BAC09268.1"/>
    <property type="molecule type" value="Genomic_DNA"/>
</dbReference>
<dbReference type="RefSeq" id="NP_682506.1">
    <property type="nucleotide sequence ID" value="NC_004113.1"/>
</dbReference>
<dbReference type="RefSeq" id="WP_011057553.1">
    <property type="nucleotide sequence ID" value="NC_004113.1"/>
</dbReference>
<dbReference type="SMR" id="Q8DI74"/>
<dbReference type="STRING" id="197221.gene:10748320"/>
<dbReference type="EnsemblBacteria" id="BAC09268">
    <property type="protein sequence ID" value="BAC09268"/>
    <property type="gene ID" value="BAC09268"/>
</dbReference>
<dbReference type="KEGG" id="tel:tll1716"/>
<dbReference type="PATRIC" id="fig|197221.4.peg.1797"/>
<dbReference type="eggNOG" id="COG1492">
    <property type="taxonomic scope" value="Bacteria"/>
</dbReference>
<dbReference type="UniPathway" id="UPA00148"/>
<dbReference type="Proteomes" id="UP000000440">
    <property type="component" value="Chromosome"/>
</dbReference>
<dbReference type="GO" id="GO:0015420">
    <property type="term" value="F:ABC-type vitamin B12 transporter activity"/>
    <property type="evidence" value="ECO:0007669"/>
    <property type="project" value="UniProtKB-UniRule"/>
</dbReference>
<dbReference type="GO" id="GO:0003824">
    <property type="term" value="F:catalytic activity"/>
    <property type="evidence" value="ECO:0007669"/>
    <property type="project" value="InterPro"/>
</dbReference>
<dbReference type="GO" id="GO:0009236">
    <property type="term" value="P:cobalamin biosynthetic process"/>
    <property type="evidence" value="ECO:0007669"/>
    <property type="project" value="UniProtKB-UniRule"/>
</dbReference>
<dbReference type="CDD" id="cd05389">
    <property type="entry name" value="CobQ_N"/>
    <property type="match status" value="1"/>
</dbReference>
<dbReference type="CDD" id="cd01750">
    <property type="entry name" value="GATase1_CobQ"/>
    <property type="match status" value="1"/>
</dbReference>
<dbReference type="Gene3D" id="3.40.50.880">
    <property type="match status" value="1"/>
</dbReference>
<dbReference type="Gene3D" id="3.40.50.300">
    <property type="entry name" value="P-loop containing nucleotide triphosphate hydrolases"/>
    <property type="match status" value="1"/>
</dbReference>
<dbReference type="HAMAP" id="MF_00028">
    <property type="entry name" value="CobQ"/>
    <property type="match status" value="1"/>
</dbReference>
<dbReference type="InterPro" id="IPR029062">
    <property type="entry name" value="Class_I_gatase-like"/>
</dbReference>
<dbReference type="InterPro" id="IPR002586">
    <property type="entry name" value="CobQ/CobB/MinD/ParA_Nub-bd_dom"/>
</dbReference>
<dbReference type="InterPro" id="IPR033949">
    <property type="entry name" value="CobQ_GATase1"/>
</dbReference>
<dbReference type="InterPro" id="IPR047045">
    <property type="entry name" value="CobQ_N"/>
</dbReference>
<dbReference type="InterPro" id="IPR004459">
    <property type="entry name" value="CobQ_synth"/>
</dbReference>
<dbReference type="InterPro" id="IPR011698">
    <property type="entry name" value="GATase_3"/>
</dbReference>
<dbReference type="InterPro" id="IPR027417">
    <property type="entry name" value="P-loop_NTPase"/>
</dbReference>
<dbReference type="NCBIfam" id="TIGR00313">
    <property type="entry name" value="cobQ"/>
    <property type="match status" value="1"/>
</dbReference>
<dbReference type="NCBIfam" id="NF001989">
    <property type="entry name" value="PRK00784.1"/>
    <property type="match status" value="1"/>
</dbReference>
<dbReference type="PANTHER" id="PTHR21343:SF1">
    <property type="entry name" value="COBYRIC ACID SYNTHASE"/>
    <property type="match status" value="1"/>
</dbReference>
<dbReference type="PANTHER" id="PTHR21343">
    <property type="entry name" value="DETHIOBIOTIN SYNTHETASE"/>
    <property type="match status" value="1"/>
</dbReference>
<dbReference type="Pfam" id="PF01656">
    <property type="entry name" value="CbiA"/>
    <property type="match status" value="1"/>
</dbReference>
<dbReference type="Pfam" id="PF07685">
    <property type="entry name" value="GATase_3"/>
    <property type="match status" value="1"/>
</dbReference>
<dbReference type="SUPFAM" id="SSF52317">
    <property type="entry name" value="Class I glutamine amidotransferase-like"/>
    <property type="match status" value="1"/>
</dbReference>
<dbReference type="SUPFAM" id="SSF52540">
    <property type="entry name" value="P-loop containing nucleoside triphosphate hydrolases"/>
    <property type="match status" value="1"/>
</dbReference>
<dbReference type="PROSITE" id="PS51274">
    <property type="entry name" value="GATASE_COBBQ"/>
    <property type="match status" value="1"/>
</dbReference>
<keyword id="KW-0169">Cobalamin biosynthesis</keyword>
<keyword id="KW-0315">Glutamine amidotransferase</keyword>
<keyword id="KW-1185">Reference proteome</keyword>
<comment type="function">
    <text evidence="1">Catalyzes amidations at positions B, D, E, and G on adenosylcobyrinic A,C-diamide. NH(2) groups are provided by glutamine, and one molecule of ATP is hydrogenolyzed for each amidation.</text>
</comment>
<comment type="pathway">
    <text evidence="1">Cofactor biosynthesis; adenosylcobalamin biosynthesis.</text>
</comment>
<comment type="similarity">
    <text evidence="1">Belongs to the CobB/CobQ family. CobQ subfamily.</text>
</comment>
<feature type="chain" id="PRO_0000141333" description="Cobyric acid synthase">
    <location>
        <begin position="1"/>
        <end position="493"/>
    </location>
</feature>
<feature type="domain" description="GATase cobBQ-type" evidence="1">
    <location>
        <begin position="252"/>
        <end position="441"/>
    </location>
</feature>
<feature type="active site" description="Nucleophile" evidence="1">
    <location>
        <position position="333"/>
    </location>
</feature>
<feature type="active site" evidence="1">
    <location>
        <position position="433"/>
    </location>
</feature>
<accession>Q8DI74</accession>
<reference key="1">
    <citation type="journal article" date="2002" name="DNA Res.">
        <title>Complete genome structure of the thermophilic cyanobacterium Thermosynechococcus elongatus BP-1.</title>
        <authorList>
            <person name="Nakamura Y."/>
            <person name="Kaneko T."/>
            <person name="Sato S."/>
            <person name="Ikeuchi M."/>
            <person name="Katoh H."/>
            <person name="Sasamoto S."/>
            <person name="Watanabe A."/>
            <person name="Iriguchi M."/>
            <person name="Kawashima K."/>
            <person name="Kimura T."/>
            <person name="Kishida Y."/>
            <person name="Kiyokawa C."/>
            <person name="Kohara M."/>
            <person name="Matsumoto M."/>
            <person name="Matsuno A."/>
            <person name="Nakazaki N."/>
            <person name="Shimpo S."/>
            <person name="Sugimoto M."/>
            <person name="Takeuchi C."/>
            <person name="Yamada M."/>
            <person name="Tabata S."/>
        </authorList>
    </citation>
    <scope>NUCLEOTIDE SEQUENCE [LARGE SCALE GENOMIC DNA]</scope>
    <source>
        <strain>NIES-2133 / IAM M-273 / BP-1</strain>
    </source>
</reference>
<organism>
    <name type="scientific">Thermosynechococcus vestitus (strain NIES-2133 / IAM M-273 / BP-1)</name>
    <dbReference type="NCBI Taxonomy" id="197221"/>
    <lineage>
        <taxon>Bacteria</taxon>
        <taxon>Bacillati</taxon>
        <taxon>Cyanobacteriota</taxon>
        <taxon>Cyanophyceae</taxon>
        <taxon>Acaryochloridales</taxon>
        <taxon>Thermosynechococcaceae</taxon>
        <taxon>Thermosynechococcus</taxon>
    </lineage>
</organism>
<proteinExistence type="inferred from homology"/>
<protein>
    <recommendedName>
        <fullName evidence="1">Cobyric acid synthase</fullName>
    </recommendedName>
</protein>
<name>COBQ_THEVB</name>